<reference key="1">
    <citation type="journal article" date="1987" name="Gene">
        <title>Structure of the Bradyrhizobium japonicum gene hemA encoding 5-aminolevulinic acid synthase.</title>
        <authorList>
            <person name="McClung C.R."/>
            <person name="Somerville J.E."/>
            <person name="Guerinot M.L."/>
            <person name="Chelm B.K."/>
        </authorList>
    </citation>
    <scope>NUCLEOTIDE SEQUENCE [GENOMIC DNA]</scope>
</reference>
<reference key="2">
    <citation type="journal article" date="2002" name="DNA Res.">
        <title>Complete genomic sequence of nitrogen-fixing symbiotic bacterium Bradyrhizobium japonicum USDA110.</title>
        <authorList>
            <person name="Kaneko T."/>
            <person name="Nakamura Y."/>
            <person name="Sato S."/>
            <person name="Minamisawa K."/>
            <person name="Uchiumi T."/>
            <person name="Sasamoto S."/>
            <person name="Watanabe A."/>
            <person name="Idesawa K."/>
            <person name="Iriguchi M."/>
            <person name="Kawashima K."/>
            <person name="Kohara M."/>
            <person name="Matsumoto M."/>
            <person name="Shimpo S."/>
            <person name="Tsuruoka H."/>
            <person name="Wada T."/>
            <person name="Yamada M."/>
            <person name="Tabata S."/>
        </authorList>
    </citation>
    <scope>NUCLEOTIDE SEQUENCE [LARGE SCALE GENOMIC DNA]</scope>
    <source>
        <strain>JCM 10833 / BCRC 13528 / IAM 13628 / NBRC 14792 / USDA 110</strain>
    </source>
</reference>
<keyword id="KW-0012">Acyltransferase</keyword>
<keyword id="KW-0350">Heme biosynthesis</keyword>
<keyword id="KW-0663">Pyridoxal phosphate</keyword>
<keyword id="KW-1185">Reference proteome</keyword>
<keyword id="KW-0808">Transferase</keyword>
<accession>P08262</accession>
<evidence type="ECO:0000250" key="1">
    <source>
        <dbReference type="UniProtKB" id="P18079"/>
    </source>
</evidence>
<evidence type="ECO:0000305" key="2"/>
<comment type="catalytic activity">
    <reaction>
        <text>succinyl-CoA + glycine + H(+) = 5-aminolevulinate + CO2 + CoA</text>
        <dbReference type="Rhea" id="RHEA:12921"/>
        <dbReference type="ChEBI" id="CHEBI:15378"/>
        <dbReference type="ChEBI" id="CHEBI:16526"/>
        <dbReference type="ChEBI" id="CHEBI:57287"/>
        <dbReference type="ChEBI" id="CHEBI:57292"/>
        <dbReference type="ChEBI" id="CHEBI:57305"/>
        <dbReference type="ChEBI" id="CHEBI:356416"/>
        <dbReference type="EC" id="2.3.1.37"/>
    </reaction>
</comment>
<comment type="cofactor">
    <cofactor evidence="1">
        <name>pyridoxal 5'-phosphate</name>
        <dbReference type="ChEBI" id="CHEBI:597326"/>
    </cofactor>
</comment>
<comment type="pathway">
    <text>Porphyrin-containing compound metabolism; protoporphyrin-IX biosynthesis; 5-aminolevulinate from glycine: step 1/1.</text>
</comment>
<comment type="subunit">
    <text evidence="1">Homodimer.</text>
</comment>
<comment type="similarity">
    <text evidence="2">Belongs to the class-II pyridoxal-phosphate-dependent aminotransferase family.</text>
</comment>
<protein>
    <recommendedName>
        <fullName>5-aminolevulinate synthase</fullName>
        <ecNumber>2.3.1.37</ecNumber>
    </recommendedName>
    <alternativeName>
        <fullName>5-aminolevulinic acid synthase</fullName>
    </alternativeName>
    <alternativeName>
        <fullName>Delta-ALA synthase</fullName>
    </alternativeName>
    <alternativeName>
        <fullName>Delta-aminolevulinate synthase</fullName>
    </alternativeName>
</protein>
<name>HEM1_BRADU</name>
<feature type="chain" id="PRO_0000163825" description="5-aminolevulinate synthase">
    <location>
        <begin position="1"/>
        <end position="409"/>
    </location>
</feature>
<feature type="active site" evidence="1">
    <location>
        <position position="247"/>
    </location>
</feature>
<feature type="binding site" evidence="1">
    <location>
        <position position="21"/>
    </location>
    <ligand>
        <name>substrate</name>
    </ligand>
</feature>
<feature type="binding site" evidence="1">
    <location>
        <position position="136"/>
    </location>
    <ligand>
        <name>substrate</name>
    </ligand>
</feature>
<feature type="binding site" description="in other chain" evidence="1">
    <location>
        <position position="188"/>
    </location>
    <ligand>
        <name>pyridoxal 5'-phosphate</name>
        <dbReference type="ChEBI" id="CHEBI:597326"/>
        <note>ligand shared between dimeric partners</note>
    </ligand>
</feature>
<feature type="binding site" description="in other chain" evidence="1">
    <location>
        <position position="216"/>
    </location>
    <ligand>
        <name>pyridoxal 5'-phosphate</name>
        <dbReference type="ChEBI" id="CHEBI:597326"/>
        <note>ligand shared between dimeric partners</note>
    </ligand>
</feature>
<feature type="binding site" description="in other chain" evidence="1">
    <location>
        <position position="244"/>
    </location>
    <ligand>
        <name>pyridoxal 5'-phosphate</name>
        <dbReference type="ChEBI" id="CHEBI:597326"/>
        <note>ligand shared between dimeric partners</note>
    </ligand>
</feature>
<feature type="binding site" evidence="1">
    <location>
        <position position="276"/>
    </location>
    <ligand>
        <name>pyridoxal 5'-phosphate</name>
        <dbReference type="ChEBI" id="CHEBI:597326"/>
        <note>ligand shared between dimeric partners</note>
    </ligand>
</feature>
<feature type="binding site" evidence="1">
    <location>
        <position position="277"/>
    </location>
    <ligand>
        <name>pyridoxal 5'-phosphate</name>
        <dbReference type="ChEBI" id="CHEBI:597326"/>
        <note>ligand shared between dimeric partners</note>
    </ligand>
</feature>
<feature type="binding site" evidence="1">
    <location>
        <position position="362"/>
    </location>
    <ligand>
        <name>substrate</name>
    </ligand>
</feature>
<feature type="modified residue" description="N6-(pyridoxal phosphate)lysine" evidence="1">
    <location>
        <position position="247"/>
    </location>
</feature>
<feature type="sequence conflict" description="In Ref. 1; AAA26216." evidence="2" ref="1">
    <original>Q</original>
    <variation>R</variation>
    <location>
        <position position="261"/>
    </location>
</feature>
<organism>
    <name type="scientific">Bradyrhizobium diazoefficiens (strain JCM 10833 / BCRC 13528 / IAM 13628 / NBRC 14792 / USDA 110)</name>
    <dbReference type="NCBI Taxonomy" id="224911"/>
    <lineage>
        <taxon>Bacteria</taxon>
        <taxon>Pseudomonadati</taxon>
        <taxon>Pseudomonadota</taxon>
        <taxon>Alphaproteobacteria</taxon>
        <taxon>Hyphomicrobiales</taxon>
        <taxon>Nitrobacteraceae</taxon>
        <taxon>Bradyrhizobium</taxon>
    </lineage>
</organism>
<proteinExistence type="inferred from homology"/>
<sequence>MDYSQFFNSALDRLHTERRYRVFADLERMAGRFPHAIWHSPKGKRDVVIWCSNDYLGMGQHPKVVGAMVETATRVGTGAGGTRNIAGTHHPLVQLEAELADLHGKEAALLFTSGYVSNQTGIATIAKLIPNCLILSDELNHNSMIEGIRQSGCERQVFRHNDLADLEALLKAAGANRPKLIACESLYSMDGDVAPLAKICDLAEKYNAMTYVDEVHAVGMYGPRGGGIAERDGVMHRIDILEGTLAKAFGCLGGYIAANGQIIDAVRSYAPGFIFTTALPPAICSAATAAIKHLKTSSWERERHQDRAARVKAILNAAGLPVMSSDTHIVPLFIGDAEKCKQASDLLLEEHGIYIQPINYPTVAKGSERLRITPSPYHDDGLIDQLAEALLQVWDRLGLPLKQKSLAAE</sequence>
<dbReference type="EC" id="2.3.1.37"/>
<dbReference type="EMBL" id="M16751">
    <property type="protein sequence ID" value="AAA26216.1"/>
    <property type="molecule type" value="Genomic_DNA"/>
</dbReference>
<dbReference type="EMBL" id="BA000040">
    <property type="protein sequence ID" value="BAC46465.1"/>
    <property type="molecule type" value="Genomic_DNA"/>
</dbReference>
<dbReference type="PIR" id="A27478">
    <property type="entry name" value="SYZJAL"/>
</dbReference>
<dbReference type="RefSeq" id="NP_767840.1">
    <property type="nucleotide sequence ID" value="NC_004463.1"/>
</dbReference>
<dbReference type="RefSeq" id="WP_011084018.1">
    <property type="nucleotide sequence ID" value="NC_004463.1"/>
</dbReference>
<dbReference type="SMR" id="P08262"/>
<dbReference type="FunCoup" id="P08262">
    <property type="interactions" value="525"/>
</dbReference>
<dbReference type="STRING" id="224911.AAV28_02880"/>
<dbReference type="EnsemblBacteria" id="BAC46465">
    <property type="protein sequence ID" value="BAC46465"/>
    <property type="gene ID" value="BAC46465"/>
</dbReference>
<dbReference type="GeneID" id="46488473"/>
<dbReference type="KEGG" id="bja:bll1200"/>
<dbReference type="PATRIC" id="fig|224911.44.peg.602"/>
<dbReference type="eggNOG" id="COG0156">
    <property type="taxonomic scope" value="Bacteria"/>
</dbReference>
<dbReference type="HOGENOM" id="CLU_015846_11_1_5"/>
<dbReference type="InParanoid" id="P08262"/>
<dbReference type="OrthoDB" id="9807157at2"/>
<dbReference type="PhylomeDB" id="P08262"/>
<dbReference type="UniPathway" id="UPA00251">
    <property type="reaction ID" value="UER00375"/>
</dbReference>
<dbReference type="Proteomes" id="UP000002526">
    <property type="component" value="Chromosome"/>
</dbReference>
<dbReference type="GO" id="GO:0003870">
    <property type="term" value="F:5-aminolevulinate synthase activity"/>
    <property type="evidence" value="ECO:0007669"/>
    <property type="project" value="UniProtKB-EC"/>
</dbReference>
<dbReference type="GO" id="GO:0030170">
    <property type="term" value="F:pyridoxal phosphate binding"/>
    <property type="evidence" value="ECO:0007669"/>
    <property type="project" value="InterPro"/>
</dbReference>
<dbReference type="GO" id="GO:0006782">
    <property type="term" value="P:protoporphyrinogen IX biosynthetic process"/>
    <property type="evidence" value="ECO:0007669"/>
    <property type="project" value="UniProtKB-UniPathway"/>
</dbReference>
<dbReference type="CDD" id="cd06454">
    <property type="entry name" value="KBL_like"/>
    <property type="match status" value="1"/>
</dbReference>
<dbReference type="FunFam" id="3.40.640.10:FF:000006">
    <property type="entry name" value="5-aminolevulinate synthase, mitochondrial"/>
    <property type="match status" value="1"/>
</dbReference>
<dbReference type="Gene3D" id="3.90.1150.10">
    <property type="entry name" value="Aspartate Aminotransferase, domain 1"/>
    <property type="match status" value="1"/>
</dbReference>
<dbReference type="Gene3D" id="3.40.640.10">
    <property type="entry name" value="Type I PLP-dependent aspartate aminotransferase-like (Major domain)"/>
    <property type="match status" value="1"/>
</dbReference>
<dbReference type="InterPro" id="IPR010961">
    <property type="entry name" value="4pyrrol_synth_NH2levulA_synth"/>
</dbReference>
<dbReference type="InterPro" id="IPR001917">
    <property type="entry name" value="Aminotrans_II_pyridoxalP_BS"/>
</dbReference>
<dbReference type="InterPro" id="IPR004839">
    <property type="entry name" value="Aminotransferase_I/II_large"/>
</dbReference>
<dbReference type="InterPro" id="IPR050087">
    <property type="entry name" value="AON_synthase_class-II"/>
</dbReference>
<dbReference type="InterPro" id="IPR015424">
    <property type="entry name" value="PyrdxlP-dep_Trfase"/>
</dbReference>
<dbReference type="InterPro" id="IPR015421">
    <property type="entry name" value="PyrdxlP-dep_Trfase_major"/>
</dbReference>
<dbReference type="InterPro" id="IPR015422">
    <property type="entry name" value="PyrdxlP-dep_Trfase_small"/>
</dbReference>
<dbReference type="NCBIfam" id="TIGR01821">
    <property type="entry name" value="5aminolev_synth"/>
    <property type="match status" value="1"/>
</dbReference>
<dbReference type="PANTHER" id="PTHR13693:SF102">
    <property type="entry name" value="2-AMINO-3-KETOBUTYRATE COENZYME A LIGASE, MITOCHONDRIAL"/>
    <property type="match status" value="1"/>
</dbReference>
<dbReference type="PANTHER" id="PTHR13693">
    <property type="entry name" value="CLASS II AMINOTRANSFERASE/8-AMINO-7-OXONONANOATE SYNTHASE"/>
    <property type="match status" value="1"/>
</dbReference>
<dbReference type="Pfam" id="PF00155">
    <property type="entry name" value="Aminotran_1_2"/>
    <property type="match status" value="1"/>
</dbReference>
<dbReference type="SUPFAM" id="SSF53383">
    <property type="entry name" value="PLP-dependent transferases"/>
    <property type="match status" value="1"/>
</dbReference>
<dbReference type="PROSITE" id="PS00599">
    <property type="entry name" value="AA_TRANSFER_CLASS_2"/>
    <property type="match status" value="1"/>
</dbReference>
<gene>
    <name type="primary">hemA</name>
    <name type="ordered locus">bll1200</name>
</gene>